<feature type="chain" id="PRO_1000019642" description="Serine--tRNA ligase">
    <location>
        <begin position="1"/>
        <end position="414"/>
    </location>
</feature>
<feature type="binding site" evidence="1">
    <location>
        <begin position="230"/>
        <end position="232"/>
    </location>
    <ligand>
        <name>L-serine</name>
        <dbReference type="ChEBI" id="CHEBI:33384"/>
    </ligand>
</feature>
<feature type="binding site" evidence="1">
    <location>
        <begin position="261"/>
        <end position="263"/>
    </location>
    <ligand>
        <name>ATP</name>
        <dbReference type="ChEBI" id="CHEBI:30616"/>
    </ligand>
</feature>
<feature type="binding site" evidence="1">
    <location>
        <position position="284"/>
    </location>
    <ligand>
        <name>L-serine</name>
        <dbReference type="ChEBI" id="CHEBI:33384"/>
    </ligand>
</feature>
<feature type="binding site" evidence="1">
    <location>
        <begin position="348"/>
        <end position="351"/>
    </location>
    <ligand>
        <name>ATP</name>
        <dbReference type="ChEBI" id="CHEBI:30616"/>
    </ligand>
</feature>
<feature type="binding site" evidence="1">
    <location>
        <position position="382"/>
    </location>
    <ligand>
        <name>L-serine</name>
        <dbReference type="ChEBI" id="CHEBI:33384"/>
    </ligand>
</feature>
<organism>
    <name type="scientific">Campylobacter fetus subsp. fetus (strain 82-40)</name>
    <dbReference type="NCBI Taxonomy" id="360106"/>
    <lineage>
        <taxon>Bacteria</taxon>
        <taxon>Pseudomonadati</taxon>
        <taxon>Campylobacterota</taxon>
        <taxon>Epsilonproteobacteria</taxon>
        <taxon>Campylobacterales</taxon>
        <taxon>Campylobacteraceae</taxon>
        <taxon>Campylobacter</taxon>
    </lineage>
</organism>
<proteinExistence type="inferred from homology"/>
<comment type="function">
    <text evidence="1">Catalyzes the attachment of serine to tRNA(Ser). Is also able to aminoacylate tRNA(Sec) with serine, to form the misacylated tRNA L-seryl-tRNA(Sec), which will be further converted into selenocysteinyl-tRNA(Sec).</text>
</comment>
<comment type="catalytic activity">
    <reaction evidence="1">
        <text>tRNA(Ser) + L-serine + ATP = L-seryl-tRNA(Ser) + AMP + diphosphate + H(+)</text>
        <dbReference type="Rhea" id="RHEA:12292"/>
        <dbReference type="Rhea" id="RHEA-COMP:9669"/>
        <dbReference type="Rhea" id="RHEA-COMP:9703"/>
        <dbReference type="ChEBI" id="CHEBI:15378"/>
        <dbReference type="ChEBI" id="CHEBI:30616"/>
        <dbReference type="ChEBI" id="CHEBI:33019"/>
        <dbReference type="ChEBI" id="CHEBI:33384"/>
        <dbReference type="ChEBI" id="CHEBI:78442"/>
        <dbReference type="ChEBI" id="CHEBI:78533"/>
        <dbReference type="ChEBI" id="CHEBI:456215"/>
        <dbReference type="EC" id="6.1.1.11"/>
    </reaction>
</comment>
<comment type="catalytic activity">
    <reaction evidence="1">
        <text>tRNA(Sec) + L-serine + ATP = L-seryl-tRNA(Sec) + AMP + diphosphate + H(+)</text>
        <dbReference type="Rhea" id="RHEA:42580"/>
        <dbReference type="Rhea" id="RHEA-COMP:9742"/>
        <dbReference type="Rhea" id="RHEA-COMP:10128"/>
        <dbReference type="ChEBI" id="CHEBI:15378"/>
        <dbReference type="ChEBI" id="CHEBI:30616"/>
        <dbReference type="ChEBI" id="CHEBI:33019"/>
        <dbReference type="ChEBI" id="CHEBI:33384"/>
        <dbReference type="ChEBI" id="CHEBI:78442"/>
        <dbReference type="ChEBI" id="CHEBI:78533"/>
        <dbReference type="ChEBI" id="CHEBI:456215"/>
        <dbReference type="EC" id="6.1.1.11"/>
    </reaction>
</comment>
<comment type="pathway">
    <text evidence="1">Aminoacyl-tRNA biosynthesis; selenocysteinyl-tRNA(Sec) biosynthesis; L-seryl-tRNA(Sec) from L-serine and tRNA(Sec): step 1/1.</text>
</comment>
<comment type="subunit">
    <text evidence="1">Homodimer. The tRNA molecule binds across the dimer.</text>
</comment>
<comment type="subcellular location">
    <subcellularLocation>
        <location evidence="1">Cytoplasm</location>
    </subcellularLocation>
</comment>
<comment type="domain">
    <text evidence="1">Consists of two distinct domains, a catalytic core and a N-terminal extension that is involved in tRNA binding.</text>
</comment>
<comment type="similarity">
    <text evidence="1">Belongs to the class-II aminoacyl-tRNA synthetase family. Type-1 seryl-tRNA synthetase subfamily.</text>
</comment>
<reference key="1">
    <citation type="submission" date="2006-11" db="EMBL/GenBank/DDBJ databases">
        <title>Sequence of Campylobacter fetus subsp. fetus 82-40.</title>
        <authorList>
            <person name="Fouts D.E."/>
            <person name="Nelson K.E."/>
        </authorList>
    </citation>
    <scope>NUCLEOTIDE SEQUENCE [LARGE SCALE GENOMIC DNA]</scope>
    <source>
        <strain>82-40</strain>
    </source>
</reference>
<dbReference type="EC" id="6.1.1.11" evidence="1"/>
<dbReference type="EMBL" id="CP000487">
    <property type="protein sequence ID" value="ABK83394.1"/>
    <property type="molecule type" value="Genomic_DNA"/>
</dbReference>
<dbReference type="RefSeq" id="WP_002850155.1">
    <property type="nucleotide sequence ID" value="NC_008599.1"/>
</dbReference>
<dbReference type="SMR" id="A0RQK5"/>
<dbReference type="GeneID" id="61065160"/>
<dbReference type="KEGG" id="cff:CFF8240_1342"/>
<dbReference type="eggNOG" id="COG0172">
    <property type="taxonomic scope" value="Bacteria"/>
</dbReference>
<dbReference type="HOGENOM" id="CLU_023797_1_1_7"/>
<dbReference type="UniPathway" id="UPA00906">
    <property type="reaction ID" value="UER00895"/>
</dbReference>
<dbReference type="Proteomes" id="UP000000760">
    <property type="component" value="Chromosome"/>
</dbReference>
<dbReference type="GO" id="GO:0005737">
    <property type="term" value="C:cytoplasm"/>
    <property type="evidence" value="ECO:0007669"/>
    <property type="project" value="UniProtKB-SubCell"/>
</dbReference>
<dbReference type="GO" id="GO:0005524">
    <property type="term" value="F:ATP binding"/>
    <property type="evidence" value="ECO:0007669"/>
    <property type="project" value="UniProtKB-UniRule"/>
</dbReference>
<dbReference type="GO" id="GO:0004828">
    <property type="term" value="F:serine-tRNA ligase activity"/>
    <property type="evidence" value="ECO:0007669"/>
    <property type="project" value="UniProtKB-UniRule"/>
</dbReference>
<dbReference type="GO" id="GO:0016260">
    <property type="term" value="P:selenocysteine biosynthetic process"/>
    <property type="evidence" value="ECO:0007669"/>
    <property type="project" value="UniProtKB-UniRule"/>
</dbReference>
<dbReference type="GO" id="GO:0006434">
    <property type="term" value="P:seryl-tRNA aminoacylation"/>
    <property type="evidence" value="ECO:0007669"/>
    <property type="project" value="UniProtKB-UniRule"/>
</dbReference>
<dbReference type="CDD" id="cd00770">
    <property type="entry name" value="SerRS_core"/>
    <property type="match status" value="1"/>
</dbReference>
<dbReference type="Gene3D" id="3.30.930.10">
    <property type="entry name" value="Bira Bifunctional Protein, Domain 2"/>
    <property type="match status" value="1"/>
</dbReference>
<dbReference type="Gene3D" id="1.10.287.40">
    <property type="entry name" value="Serine-tRNA synthetase, tRNA binding domain"/>
    <property type="match status" value="1"/>
</dbReference>
<dbReference type="HAMAP" id="MF_00176">
    <property type="entry name" value="Ser_tRNA_synth_type1"/>
    <property type="match status" value="1"/>
</dbReference>
<dbReference type="InterPro" id="IPR002314">
    <property type="entry name" value="aa-tRNA-synt_IIb"/>
</dbReference>
<dbReference type="InterPro" id="IPR006195">
    <property type="entry name" value="aa-tRNA-synth_II"/>
</dbReference>
<dbReference type="InterPro" id="IPR045864">
    <property type="entry name" value="aa-tRNA-synth_II/BPL/LPL"/>
</dbReference>
<dbReference type="InterPro" id="IPR002317">
    <property type="entry name" value="Ser-tRNA-ligase_type_1"/>
</dbReference>
<dbReference type="InterPro" id="IPR015866">
    <property type="entry name" value="Ser-tRNA-synth_1_N"/>
</dbReference>
<dbReference type="InterPro" id="IPR042103">
    <property type="entry name" value="SerRS_1_N_sf"/>
</dbReference>
<dbReference type="InterPro" id="IPR033729">
    <property type="entry name" value="SerRS_core"/>
</dbReference>
<dbReference type="InterPro" id="IPR010978">
    <property type="entry name" value="tRNA-bd_arm"/>
</dbReference>
<dbReference type="NCBIfam" id="TIGR00414">
    <property type="entry name" value="serS"/>
    <property type="match status" value="1"/>
</dbReference>
<dbReference type="PANTHER" id="PTHR43697:SF1">
    <property type="entry name" value="SERINE--TRNA LIGASE"/>
    <property type="match status" value="1"/>
</dbReference>
<dbReference type="PANTHER" id="PTHR43697">
    <property type="entry name" value="SERYL-TRNA SYNTHETASE"/>
    <property type="match status" value="1"/>
</dbReference>
<dbReference type="Pfam" id="PF02403">
    <property type="entry name" value="Seryl_tRNA_N"/>
    <property type="match status" value="1"/>
</dbReference>
<dbReference type="Pfam" id="PF00587">
    <property type="entry name" value="tRNA-synt_2b"/>
    <property type="match status" value="1"/>
</dbReference>
<dbReference type="PIRSF" id="PIRSF001529">
    <property type="entry name" value="Ser-tRNA-synth_IIa"/>
    <property type="match status" value="1"/>
</dbReference>
<dbReference type="PRINTS" id="PR00981">
    <property type="entry name" value="TRNASYNTHSER"/>
</dbReference>
<dbReference type="SUPFAM" id="SSF55681">
    <property type="entry name" value="Class II aaRS and biotin synthetases"/>
    <property type="match status" value="1"/>
</dbReference>
<dbReference type="SUPFAM" id="SSF46589">
    <property type="entry name" value="tRNA-binding arm"/>
    <property type="match status" value="1"/>
</dbReference>
<dbReference type="PROSITE" id="PS50862">
    <property type="entry name" value="AA_TRNA_LIGASE_II"/>
    <property type="match status" value="1"/>
</dbReference>
<name>SYS_CAMFF</name>
<accession>A0RQK5</accession>
<sequence length="414" mass="46509">MINLKLIETNFDEFNAKLKAKKVDEGVLKNLLDTYNELKIKKQELENLQAVQNAKSKEVGILARSGADTTLLKTELEENKKLMQTASNLVSELETKLDTVASRVPNVIDDDVPLGKDDNDNVCIKTILEPREFNFTPKEHFELGENLGWLDFATGAKLSGSRFTVLRSDGARLSRALVNFMIDFNTARGFELVNVPFLVNSNTLYGTGQLPKFEEDLYKIRDEDLYLIPTSEVPVTNIYNNEIIPVENLPIKMTCYSACFRQEAGSAGRDTRGMIRQHQFEKVELVSISKPEDSAKILDEMVSCASDMLKELGLPHRHMMLCSADLGFGAAKTIDLEVWLPGQGKYREISSISNTRDFQARRAKIRYKDGKKNALVHTLNGSSLAVGRTLIAIMENYQNSDGSINIPEVLKKYM</sequence>
<gene>
    <name evidence="1" type="primary">serS</name>
    <name type="ordered locus">CFF8240_1342</name>
</gene>
<protein>
    <recommendedName>
        <fullName evidence="1">Serine--tRNA ligase</fullName>
        <ecNumber evidence="1">6.1.1.11</ecNumber>
    </recommendedName>
    <alternativeName>
        <fullName evidence="1">Seryl-tRNA synthetase</fullName>
        <shortName evidence="1">SerRS</shortName>
    </alternativeName>
    <alternativeName>
        <fullName evidence="1">Seryl-tRNA(Ser/Sec) synthetase</fullName>
    </alternativeName>
</protein>
<evidence type="ECO:0000255" key="1">
    <source>
        <dbReference type="HAMAP-Rule" id="MF_00176"/>
    </source>
</evidence>
<keyword id="KW-0030">Aminoacyl-tRNA synthetase</keyword>
<keyword id="KW-0067">ATP-binding</keyword>
<keyword id="KW-0963">Cytoplasm</keyword>
<keyword id="KW-0436">Ligase</keyword>
<keyword id="KW-0547">Nucleotide-binding</keyword>
<keyword id="KW-0648">Protein biosynthesis</keyword>